<name>Y1024_METJA</name>
<gene>
    <name type="ordered locus">MJ1024</name>
</gene>
<protein>
    <recommendedName>
        <fullName>Uncharacterized protein MJ1024</fullName>
    </recommendedName>
</protein>
<reference key="1">
    <citation type="journal article" date="1996" name="Science">
        <title>Complete genome sequence of the methanogenic archaeon, Methanococcus jannaschii.</title>
        <authorList>
            <person name="Bult C.J."/>
            <person name="White O."/>
            <person name="Olsen G.J."/>
            <person name="Zhou L."/>
            <person name="Fleischmann R.D."/>
            <person name="Sutton G.G."/>
            <person name="Blake J.A."/>
            <person name="FitzGerald L.M."/>
            <person name="Clayton R.A."/>
            <person name="Gocayne J.D."/>
            <person name="Kerlavage A.R."/>
            <person name="Dougherty B.A."/>
            <person name="Tomb J.-F."/>
            <person name="Adams M.D."/>
            <person name="Reich C.I."/>
            <person name="Overbeek R."/>
            <person name="Kirkness E.F."/>
            <person name="Weinstock K.G."/>
            <person name="Merrick J.M."/>
            <person name="Glodek A."/>
            <person name="Scott J.L."/>
            <person name="Geoghagen N.S.M."/>
            <person name="Weidman J.F."/>
            <person name="Fuhrmann J.L."/>
            <person name="Nguyen D."/>
            <person name="Utterback T.R."/>
            <person name="Kelley J.M."/>
            <person name="Peterson J.D."/>
            <person name="Sadow P.W."/>
            <person name="Hanna M.C."/>
            <person name="Cotton M.D."/>
            <person name="Roberts K.M."/>
            <person name="Hurst M.A."/>
            <person name="Kaine B.P."/>
            <person name="Borodovsky M."/>
            <person name="Klenk H.-P."/>
            <person name="Fraser C.M."/>
            <person name="Smith H.O."/>
            <person name="Woese C.R."/>
            <person name="Venter J.C."/>
        </authorList>
    </citation>
    <scope>NUCLEOTIDE SEQUENCE [LARGE SCALE GENOMIC DNA]</scope>
    <source>
        <strain>ATCC 43067 / DSM 2661 / JAL-1 / JCM 10045 / NBRC 100440</strain>
    </source>
</reference>
<accession>Q58430</accession>
<feature type="chain" id="PRO_0000107147" description="Uncharacterized protein MJ1024">
    <location>
        <begin position="1"/>
        <end position="403"/>
    </location>
</feature>
<feature type="transmembrane region" description="Helical" evidence="1">
    <location>
        <begin position="31"/>
        <end position="51"/>
    </location>
</feature>
<feature type="transmembrane region" description="Helical" evidence="1">
    <location>
        <begin position="186"/>
        <end position="206"/>
    </location>
</feature>
<feature type="transmembrane region" description="Helical" evidence="1">
    <location>
        <begin position="238"/>
        <end position="258"/>
    </location>
</feature>
<feature type="transmembrane region" description="Helical" evidence="1">
    <location>
        <begin position="268"/>
        <end position="288"/>
    </location>
</feature>
<feature type="transmembrane region" description="Helical" evidence="1">
    <location>
        <begin position="303"/>
        <end position="323"/>
    </location>
</feature>
<feature type="transmembrane region" description="Helical" evidence="1">
    <location>
        <begin position="355"/>
        <end position="375"/>
    </location>
</feature>
<proteinExistence type="predicted"/>
<organism>
    <name type="scientific">Methanocaldococcus jannaschii (strain ATCC 43067 / DSM 2661 / JAL-1 / JCM 10045 / NBRC 100440)</name>
    <name type="common">Methanococcus jannaschii</name>
    <dbReference type="NCBI Taxonomy" id="243232"/>
    <lineage>
        <taxon>Archaea</taxon>
        <taxon>Methanobacteriati</taxon>
        <taxon>Methanobacteriota</taxon>
        <taxon>Methanomada group</taxon>
        <taxon>Methanococci</taxon>
        <taxon>Methanococcales</taxon>
        <taxon>Methanocaldococcaceae</taxon>
        <taxon>Methanocaldococcus</taxon>
    </lineage>
</organism>
<keyword id="KW-1003">Cell membrane</keyword>
<keyword id="KW-0472">Membrane</keyword>
<keyword id="KW-1185">Reference proteome</keyword>
<keyword id="KW-0812">Transmembrane</keyword>
<keyword id="KW-1133">Transmembrane helix</keyword>
<comment type="subcellular location">
    <subcellularLocation>
        <location evidence="2">Cell membrane</location>
        <topology evidence="2">Multi-pass membrane protein</topology>
    </subcellularLocation>
</comment>
<comment type="similarity">
    <text evidence="2">To B.subtilis YhaP.</text>
</comment>
<sequence length="403" mass="45294">MNSGDIMKLNIKKILTIGKREVLSNIKRKQFLIATIIGPLIIIALAIIGSFMMFDIKEIKVGYVDEFGLGIPNKVVENNFGKNTTIYFIKYENIEKGKEDVLNKSIDALIVIPKDYLDSGKIILYSTTKSPNPIITDTLNKFLLKKLLKGKVDNKTYNRVINPMNLEIYSVSKKGFEKETFLSQLLPIGFVFLLYMAISSLSGIIVSSIIEEKQNRIMELLLCYSSAENLMFGKILGISAVGLLQIGIWVLFALPIIITYAVKVSLYLAIFALIYFVLGYLFYSSLLCGLSSLFSHPKDASQLISPIIIIQIIPIMFMNTIMVNPNHYMAKILSYVPFTAPYAVVLRASVTQLPLIEIVLSTAIMIVSIVISFILSIKLFKIGVLLYEENLTLKRVIKIIFKK</sequence>
<evidence type="ECO:0000255" key="1"/>
<evidence type="ECO:0000305" key="2"/>
<dbReference type="EMBL" id="L77117">
    <property type="protein sequence ID" value="AAB99028.1"/>
    <property type="molecule type" value="Genomic_DNA"/>
</dbReference>
<dbReference type="PIR" id="G64427">
    <property type="entry name" value="G64427"/>
</dbReference>
<dbReference type="STRING" id="243232.MJ_1024"/>
<dbReference type="PaxDb" id="243232-MJ_1024"/>
<dbReference type="EnsemblBacteria" id="AAB99028">
    <property type="protein sequence ID" value="AAB99028"/>
    <property type="gene ID" value="MJ_1024"/>
</dbReference>
<dbReference type="KEGG" id="mja:MJ_1024"/>
<dbReference type="eggNOG" id="arCOG01462">
    <property type="taxonomic scope" value="Archaea"/>
</dbReference>
<dbReference type="HOGENOM" id="CLU_046841_0_1_2"/>
<dbReference type="InParanoid" id="Q58430"/>
<dbReference type="OrthoDB" id="146982at2157"/>
<dbReference type="PhylomeDB" id="Q58430"/>
<dbReference type="Proteomes" id="UP000000805">
    <property type="component" value="Chromosome"/>
</dbReference>
<dbReference type="GO" id="GO:0005886">
    <property type="term" value="C:plasma membrane"/>
    <property type="evidence" value="ECO:0007669"/>
    <property type="project" value="UniProtKB-SubCell"/>
</dbReference>
<dbReference type="GO" id="GO:0140359">
    <property type="term" value="F:ABC-type transporter activity"/>
    <property type="evidence" value="ECO:0007669"/>
    <property type="project" value="InterPro"/>
</dbReference>
<dbReference type="InterPro" id="IPR051449">
    <property type="entry name" value="ABC-2_transporter_component"/>
</dbReference>
<dbReference type="InterPro" id="IPR013525">
    <property type="entry name" value="ABC2_TM"/>
</dbReference>
<dbReference type="PANTHER" id="PTHR30294">
    <property type="entry name" value="MEMBRANE COMPONENT OF ABC TRANSPORTER YHHJ-RELATED"/>
    <property type="match status" value="1"/>
</dbReference>
<dbReference type="PANTHER" id="PTHR30294:SF29">
    <property type="entry name" value="MULTIDRUG ABC TRANSPORTER PERMEASE YBHS-RELATED"/>
    <property type="match status" value="1"/>
</dbReference>
<dbReference type="Pfam" id="PF12698">
    <property type="entry name" value="ABC2_membrane_3"/>
    <property type="match status" value="1"/>
</dbReference>